<comment type="function">
    <text evidence="1">Involved in the biosynthesis of branched-chain amino acids (BCAA). Catalyzes an alkyl-migration followed by a ketol-acid reduction of (S)-2-acetolactate (S2AL) to yield (R)-2,3-dihydroxy-isovalerate. In the isomerase reaction, S2AL is rearranged via a Mg-dependent methyl migration to produce 3-hydroxy-3-methyl-2-ketobutyrate (HMKB). In the reductase reaction, this 2-ketoacid undergoes a metal-dependent reduction by NADPH to yield (R)-2,3-dihydroxy-isovalerate.</text>
</comment>
<comment type="catalytic activity">
    <reaction evidence="1">
        <text>(2R)-2,3-dihydroxy-3-methylbutanoate + NADP(+) = (2S)-2-acetolactate + NADPH + H(+)</text>
        <dbReference type="Rhea" id="RHEA:22068"/>
        <dbReference type="ChEBI" id="CHEBI:15378"/>
        <dbReference type="ChEBI" id="CHEBI:49072"/>
        <dbReference type="ChEBI" id="CHEBI:57783"/>
        <dbReference type="ChEBI" id="CHEBI:58349"/>
        <dbReference type="ChEBI" id="CHEBI:58476"/>
        <dbReference type="EC" id="1.1.1.86"/>
    </reaction>
</comment>
<comment type="catalytic activity">
    <reaction evidence="1">
        <text>(2R,3R)-2,3-dihydroxy-3-methylpentanoate + NADP(+) = (S)-2-ethyl-2-hydroxy-3-oxobutanoate + NADPH + H(+)</text>
        <dbReference type="Rhea" id="RHEA:13493"/>
        <dbReference type="ChEBI" id="CHEBI:15378"/>
        <dbReference type="ChEBI" id="CHEBI:49256"/>
        <dbReference type="ChEBI" id="CHEBI:49258"/>
        <dbReference type="ChEBI" id="CHEBI:57783"/>
        <dbReference type="ChEBI" id="CHEBI:58349"/>
        <dbReference type="EC" id="1.1.1.86"/>
    </reaction>
</comment>
<comment type="cofactor">
    <cofactor evidence="1">
        <name>Mg(2+)</name>
        <dbReference type="ChEBI" id="CHEBI:18420"/>
    </cofactor>
    <text evidence="1">Binds 2 magnesium ions per subunit.</text>
</comment>
<comment type="pathway">
    <text evidence="1">Amino-acid biosynthesis; L-isoleucine biosynthesis; L-isoleucine from 2-oxobutanoate: step 2/4.</text>
</comment>
<comment type="pathway">
    <text evidence="1">Amino-acid biosynthesis; L-valine biosynthesis; L-valine from pyruvate: step 2/4.</text>
</comment>
<comment type="similarity">
    <text evidence="1">Belongs to the ketol-acid reductoisomerase family.</text>
</comment>
<accession>Q0TAU6</accession>
<organism>
    <name type="scientific">Escherichia coli O6:K15:H31 (strain 536 / UPEC)</name>
    <dbReference type="NCBI Taxonomy" id="362663"/>
    <lineage>
        <taxon>Bacteria</taxon>
        <taxon>Pseudomonadati</taxon>
        <taxon>Pseudomonadota</taxon>
        <taxon>Gammaproteobacteria</taxon>
        <taxon>Enterobacterales</taxon>
        <taxon>Enterobacteriaceae</taxon>
        <taxon>Escherichia</taxon>
    </lineage>
</organism>
<protein>
    <recommendedName>
        <fullName evidence="1">Ketol-acid reductoisomerase (NADP(+))</fullName>
        <shortName evidence="1">KARI</shortName>
        <ecNumber evidence="1">1.1.1.86</ecNumber>
    </recommendedName>
    <alternativeName>
        <fullName evidence="1">Acetohydroxy-acid isomeroreductase</fullName>
        <shortName evidence="1">AHIR</shortName>
    </alternativeName>
    <alternativeName>
        <fullName evidence="1">Alpha-keto-beta-hydroxylacyl reductoisomerase</fullName>
    </alternativeName>
    <alternativeName>
        <fullName evidence="1">Ketol-acid reductoisomerase type 2</fullName>
    </alternativeName>
    <alternativeName>
        <fullName evidence="1">Ketol-acid reductoisomerase type II</fullName>
    </alternativeName>
</protein>
<gene>
    <name evidence="1" type="primary">ilvC</name>
    <name type="ordered locus">ECP_3967</name>
</gene>
<proteinExistence type="inferred from homology"/>
<keyword id="KW-0028">Amino-acid biosynthesis</keyword>
<keyword id="KW-0100">Branched-chain amino acid biosynthesis</keyword>
<keyword id="KW-0460">Magnesium</keyword>
<keyword id="KW-0479">Metal-binding</keyword>
<keyword id="KW-0521">NADP</keyword>
<keyword id="KW-0560">Oxidoreductase</keyword>
<keyword id="KW-0677">Repeat</keyword>
<name>ILVC_ECOL5</name>
<sequence>MANYFNTLNLRQQLAQLGKCRFMGRDEFADGASYLQGKKVVIVGCGAQGLNQGLNMRDSGLDISYALRKEAIAEKRASWRKATENGFKVGTYEELIPQADLVVNLTPDKQHSDVVRTVQPLMKDGAALGYSHGFNIVEVGEQIRKDITVVMVAPKCPGTEVREEYKRGFGVPTLIAVHPENDPKGEGMAIAKAWAAATGGHRAGVLESSFVAEVKSDLMGEQTILCGMLQAGSLLCFDKLVEEGTDPAYAEKLIQFGWETITEALKQGGITLMMDRLSNPAKLRAYALSEQLKEIMAPLFQKHMDDIISGEFSSGMMADWANDDKKLLTWREETGKTAFETAPQYEGKIGEQEYFDKGVLMIAMVKAGVELAFETMVDSGIIEESAYYESLHELPLIANTIARKRLYEMNVVISDTAEYGNYLFSYACVPLLKPFMAELQPGDLGKAIPEGAVDNAQLRDVNEAIRSHAIEQVGKKLRGYMTDMKRIAVAG</sequence>
<feature type="chain" id="PRO_0000252759" description="Ketol-acid reductoisomerase (NADP(+))">
    <location>
        <begin position="1"/>
        <end position="491"/>
    </location>
</feature>
<feature type="domain" description="KARI N-terminal Rossmann" evidence="2">
    <location>
        <begin position="15"/>
        <end position="208"/>
    </location>
</feature>
<feature type="domain" description="KARI C-terminal knotted 1" evidence="3">
    <location>
        <begin position="209"/>
        <end position="344"/>
    </location>
</feature>
<feature type="domain" description="KARI C-terminal knotted 2" evidence="3">
    <location>
        <begin position="345"/>
        <end position="484"/>
    </location>
</feature>
<feature type="active site" evidence="1">
    <location>
        <position position="132"/>
    </location>
</feature>
<feature type="binding site" evidence="1">
    <location>
        <begin position="45"/>
        <end position="48"/>
    </location>
    <ligand>
        <name>NADP(+)</name>
        <dbReference type="ChEBI" id="CHEBI:58349"/>
    </ligand>
</feature>
<feature type="binding site" evidence="1">
    <location>
        <position position="68"/>
    </location>
    <ligand>
        <name>NADP(+)</name>
        <dbReference type="ChEBI" id="CHEBI:58349"/>
    </ligand>
</feature>
<feature type="binding site" evidence="1">
    <location>
        <position position="76"/>
    </location>
    <ligand>
        <name>NADP(+)</name>
        <dbReference type="ChEBI" id="CHEBI:58349"/>
    </ligand>
</feature>
<feature type="binding site" evidence="1">
    <location>
        <position position="78"/>
    </location>
    <ligand>
        <name>NADP(+)</name>
        <dbReference type="ChEBI" id="CHEBI:58349"/>
    </ligand>
</feature>
<feature type="binding site" evidence="1">
    <location>
        <begin position="108"/>
        <end position="110"/>
    </location>
    <ligand>
        <name>NADP(+)</name>
        <dbReference type="ChEBI" id="CHEBI:58349"/>
    </ligand>
</feature>
<feature type="binding site" evidence="1">
    <location>
        <position position="158"/>
    </location>
    <ligand>
        <name>NADP(+)</name>
        <dbReference type="ChEBI" id="CHEBI:58349"/>
    </ligand>
</feature>
<feature type="binding site" evidence="1">
    <location>
        <position position="217"/>
    </location>
    <ligand>
        <name>Mg(2+)</name>
        <dbReference type="ChEBI" id="CHEBI:18420"/>
        <label>1</label>
    </ligand>
</feature>
<feature type="binding site" evidence="1">
    <location>
        <position position="217"/>
    </location>
    <ligand>
        <name>Mg(2+)</name>
        <dbReference type="ChEBI" id="CHEBI:18420"/>
        <label>2</label>
    </ligand>
</feature>
<feature type="binding site" evidence="1">
    <location>
        <position position="221"/>
    </location>
    <ligand>
        <name>Mg(2+)</name>
        <dbReference type="ChEBI" id="CHEBI:18420"/>
        <label>1</label>
    </ligand>
</feature>
<feature type="binding site" evidence="1">
    <location>
        <position position="389"/>
    </location>
    <ligand>
        <name>Mg(2+)</name>
        <dbReference type="ChEBI" id="CHEBI:18420"/>
        <label>2</label>
    </ligand>
</feature>
<feature type="binding site" evidence="1">
    <location>
        <position position="393"/>
    </location>
    <ligand>
        <name>Mg(2+)</name>
        <dbReference type="ChEBI" id="CHEBI:18420"/>
        <label>2</label>
    </ligand>
</feature>
<feature type="binding site" evidence="1">
    <location>
        <position position="414"/>
    </location>
    <ligand>
        <name>substrate</name>
    </ligand>
</feature>
<evidence type="ECO:0000255" key="1">
    <source>
        <dbReference type="HAMAP-Rule" id="MF_00435"/>
    </source>
</evidence>
<evidence type="ECO:0000255" key="2">
    <source>
        <dbReference type="PROSITE-ProRule" id="PRU01197"/>
    </source>
</evidence>
<evidence type="ECO:0000255" key="3">
    <source>
        <dbReference type="PROSITE-ProRule" id="PRU01198"/>
    </source>
</evidence>
<dbReference type="EC" id="1.1.1.86" evidence="1"/>
<dbReference type="EMBL" id="CP000247">
    <property type="protein sequence ID" value="ABG71933.1"/>
    <property type="molecule type" value="Genomic_DNA"/>
</dbReference>
<dbReference type="RefSeq" id="WP_000024951.1">
    <property type="nucleotide sequence ID" value="NC_008253.1"/>
</dbReference>
<dbReference type="SMR" id="Q0TAU6"/>
<dbReference type="GeneID" id="75204765"/>
<dbReference type="KEGG" id="ecp:ECP_3967"/>
<dbReference type="HOGENOM" id="CLU_551905_0_0_6"/>
<dbReference type="UniPathway" id="UPA00047">
    <property type="reaction ID" value="UER00056"/>
</dbReference>
<dbReference type="UniPathway" id="UPA00049">
    <property type="reaction ID" value="UER00060"/>
</dbReference>
<dbReference type="Proteomes" id="UP000009182">
    <property type="component" value="Chromosome"/>
</dbReference>
<dbReference type="GO" id="GO:0005829">
    <property type="term" value="C:cytosol"/>
    <property type="evidence" value="ECO:0007669"/>
    <property type="project" value="TreeGrafter"/>
</dbReference>
<dbReference type="GO" id="GO:0004455">
    <property type="term" value="F:ketol-acid reductoisomerase activity"/>
    <property type="evidence" value="ECO:0007669"/>
    <property type="project" value="UniProtKB-UniRule"/>
</dbReference>
<dbReference type="GO" id="GO:0000287">
    <property type="term" value="F:magnesium ion binding"/>
    <property type="evidence" value="ECO:0007669"/>
    <property type="project" value="UniProtKB-UniRule"/>
</dbReference>
<dbReference type="GO" id="GO:0009097">
    <property type="term" value="P:isoleucine biosynthetic process"/>
    <property type="evidence" value="ECO:0007669"/>
    <property type="project" value="UniProtKB-UniRule"/>
</dbReference>
<dbReference type="GO" id="GO:0009099">
    <property type="term" value="P:L-valine biosynthetic process"/>
    <property type="evidence" value="ECO:0007669"/>
    <property type="project" value="UniProtKB-UniRule"/>
</dbReference>
<dbReference type="FunFam" id="1.10.1040.10:FF:000007">
    <property type="entry name" value="Ketol-acid reductoisomerase (NADP(+))"/>
    <property type="match status" value="1"/>
</dbReference>
<dbReference type="FunFam" id="3.40.50.720:FF:000043">
    <property type="entry name" value="Ketol-acid reductoisomerase (NADP(+))"/>
    <property type="match status" value="1"/>
</dbReference>
<dbReference type="Gene3D" id="1.10.1040.10">
    <property type="entry name" value="N-(1-d-carboxylethyl)-l-norvaline Dehydrogenase, domain 2"/>
    <property type="match status" value="1"/>
</dbReference>
<dbReference type="Gene3D" id="3.40.50.720">
    <property type="entry name" value="NAD(P)-binding Rossmann-like Domain"/>
    <property type="match status" value="1"/>
</dbReference>
<dbReference type="HAMAP" id="MF_00435">
    <property type="entry name" value="IlvC"/>
    <property type="match status" value="1"/>
</dbReference>
<dbReference type="InterPro" id="IPR008927">
    <property type="entry name" value="6-PGluconate_DH-like_C_sf"/>
</dbReference>
<dbReference type="InterPro" id="IPR013328">
    <property type="entry name" value="6PGD_dom2"/>
</dbReference>
<dbReference type="InterPro" id="IPR013023">
    <property type="entry name" value="KARI"/>
</dbReference>
<dbReference type="InterPro" id="IPR000506">
    <property type="entry name" value="KARI_C"/>
</dbReference>
<dbReference type="InterPro" id="IPR013116">
    <property type="entry name" value="KARI_N"/>
</dbReference>
<dbReference type="InterPro" id="IPR036291">
    <property type="entry name" value="NAD(P)-bd_dom_sf"/>
</dbReference>
<dbReference type="NCBIfam" id="TIGR00465">
    <property type="entry name" value="ilvC"/>
    <property type="match status" value="1"/>
</dbReference>
<dbReference type="NCBIfam" id="NF003557">
    <property type="entry name" value="PRK05225.1"/>
    <property type="match status" value="1"/>
</dbReference>
<dbReference type="PANTHER" id="PTHR21371">
    <property type="entry name" value="KETOL-ACID REDUCTOISOMERASE, MITOCHONDRIAL"/>
    <property type="match status" value="1"/>
</dbReference>
<dbReference type="PANTHER" id="PTHR21371:SF1">
    <property type="entry name" value="KETOL-ACID REDUCTOISOMERASE, MITOCHONDRIAL"/>
    <property type="match status" value="1"/>
</dbReference>
<dbReference type="Pfam" id="PF01450">
    <property type="entry name" value="KARI_C"/>
    <property type="match status" value="2"/>
</dbReference>
<dbReference type="Pfam" id="PF07991">
    <property type="entry name" value="KARI_N"/>
    <property type="match status" value="1"/>
</dbReference>
<dbReference type="SUPFAM" id="SSF48179">
    <property type="entry name" value="6-phosphogluconate dehydrogenase C-terminal domain-like"/>
    <property type="match status" value="2"/>
</dbReference>
<dbReference type="SUPFAM" id="SSF51735">
    <property type="entry name" value="NAD(P)-binding Rossmann-fold domains"/>
    <property type="match status" value="1"/>
</dbReference>
<dbReference type="PROSITE" id="PS51851">
    <property type="entry name" value="KARI_C"/>
    <property type="match status" value="2"/>
</dbReference>
<dbReference type="PROSITE" id="PS51850">
    <property type="entry name" value="KARI_N"/>
    <property type="match status" value="1"/>
</dbReference>
<reference key="1">
    <citation type="journal article" date="2006" name="Mol. Microbiol.">
        <title>Role of pathogenicity island-associated integrases in the genome plasticity of uropathogenic Escherichia coli strain 536.</title>
        <authorList>
            <person name="Hochhut B."/>
            <person name="Wilde C."/>
            <person name="Balling G."/>
            <person name="Middendorf B."/>
            <person name="Dobrindt U."/>
            <person name="Brzuszkiewicz E."/>
            <person name="Gottschalk G."/>
            <person name="Carniel E."/>
            <person name="Hacker J."/>
        </authorList>
    </citation>
    <scope>NUCLEOTIDE SEQUENCE [LARGE SCALE GENOMIC DNA]</scope>
    <source>
        <strain>536 / UPEC</strain>
    </source>
</reference>